<gene>
    <name evidence="5" type="primary">FTIP7</name>
    <name evidence="9" type="ordered locus">Os05g0370600</name>
    <name evidence="6" type="ordered locus">LOC_Os05g30750</name>
    <name evidence="8" type="ORF">OJ1118_F06.6</name>
    <name evidence="10" type="ORF">OsJ_18293</name>
</gene>
<feature type="chain" id="PRO_0000445340" description="FT-interacting protein 7">
    <location>
        <begin position="1"/>
        <end position="774"/>
    </location>
</feature>
<feature type="transmembrane region" description="Helical" evidence="1">
    <location>
        <begin position="575"/>
        <end position="595"/>
    </location>
</feature>
<feature type="transmembrane region" description="Helical" evidence="1">
    <location>
        <begin position="606"/>
        <end position="626"/>
    </location>
</feature>
<feature type="transmembrane region" description="Helical" evidence="1">
    <location>
        <begin position="714"/>
        <end position="734"/>
    </location>
</feature>
<feature type="domain" description="C2 1" evidence="2">
    <location>
        <begin position="23"/>
        <end position="143"/>
    </location>
</feature>
<feature type="domain" description="C2 2" evidence="2">
    <location>
        <begin position="182"/>
        <end position="305"/>
    </location>
</feature>
<feature type="domain" description="C2 3" evidence="2">
    <location>
        <begin position="346"/>
        <end position="472"/>
    </location>
</feature>
<feature type="region of interest" description="Disordered" evidence="3">
    <location>
        <begin position="1"/>
        <end position="25"/>
    </location>
</feature>
<feature type="compositionally biased region" description="Basic and acidic residues" evidence="3">
    <location>
        <begin position="1"/>
        <end position="17"/>
    </location>
</feature>
<feature type="binding site" evidence="2">
    <location>
        <position position="56"/>
    </location>
    <ligand>
        <name>Ca(2+)</name>
        <dbReference type="ChEBI" id="CHEBI:29108"/>
        <label>1</label>
    </ligand>
</feature>
<feature type="binding site" evidence="2">
    <location>
        <position position="56"/>
    </location>
    <ligand>
        <name>Ca(2+)</name>
        <dbReference type="ChEBI" id="CHEBI:29108"/>
        <label>2</label>
    </ligand>
</feature>
<feature type="binding site" evidence="2">
    <location>
        <position position="62"/>
    </location>
    <ligand>
        <name>Ca(2+)</name>
        <dbReference type="ChEBI" id="CHEBI:29108"/>
        <label>1</label>
    </ligand>
</feature>
<feature type="binding site" evidence="2">
    <location>
        <position position="109"/>
    </location>
    <ligand>
        <name>Ca(2+)</name>
        <dbReference type="ChEBI" id="CHEBI:29108"/>
        <label>1</label>
    </ligand>
</feature>
<feature type="binding site" evidence="2">
    <location>
        <position position="109"/>
    </location>
    <ligand>
        <name>Ca(2+)</name>
        <dbReference type="ChEBI" id="CHEBI:29108"/>
        <label>2</label>
    </ligand>
</feature>
<feature type="binding site" evidence="2">
    <location>
        <position position="111"/>
    </location>
    <ligand>
        <name>Ca(2+)</name>
        <dbReference type="ChEBI" id="CHEBI:29108"/>
        <label>1</label>
    </ligand>
</feature>
<feature type="binding site" evidence="2">
    <location>
        <position position="111"/>
    </location>
    <ligand>
        <name>Ca(2+)</name>
        <dbReference type="ChEBI" id="CHEBI:29108"/>
        <label>2</label>
    </ligand>
</feature>
<feature type="binding site" evidence="2">
    <location>
        <position position="116"/>
    </location>
    <ligand>
        <name>Ca(2+)</name>
        <dbReference type="ChEBI" id="CHEBI:29108"/>
        <label>2</label>
    </ligand>
</feature>
<organism>
    <name type="scientific">Oryza sativa subsp. japonica</name>
    <name type="common">Rice</name>
    <dbReference type="NCBI Taxonomy" id="39947"/>
    <lineage>
        <taxon>Eukaryota</taxon>
        <taxon>Viridiplantae</taxon>
        <taxon>Streptophyta</taxon>
        <taxon>Embryophyta</taxon>
        <taxon>Tracheophyta</taxon>
        <taxon>Spermatophyta</taxon>
        <taxon>Magnoliopsida</taxon>
        <taxon>Liliopsida</taxon>
        <taxon>Poales</taxon>
        <taxon>Poaceae</taxon>
        <taxon>BOP clade</taxon>
        <taxon>Oryzoideae</taxon>
        <taxon>Oryzeae</taxon>
        <taxon>Oryzinae</taxon>
        <taxon>Oryza</taxon>
        <taxon>Oryza sativa</taxon>
    </lineage>
</organism>
<protein>
    <recommendedName>
        <fullName evidence="5">FT-interacting protein 7</fullName>
        <shortName evidence="5">OsFTIP7</shortName>
    </recommendedName>
</protein>
<accession>Q60EW9</accession>
<sequence length="774" mass="89345">MMQRPFRPEEYSLKETSPHLGGGAAGDKLTTTYDLVEQMQYLYVRVVKAKDLPSKDITGSCDPYVEVKLGNYKGTTRHFEKKTNPEWNQVFAFSKERIQSSVVEIIVKDKDFVKDDFIGRVLFDLNEVPKRVPPDSPLAPQWYRLEERNGHKVKGELMLAVWMGTQADEAFPEAWHSDAASIPGDGLASIRSKVYLTPKLWYLRVNVIEAQDLIPNDRTRFPDVYVKAMLGNQALRTRVSPSRTLNPMWNEDLMFVAAEPFEEHLILSVEDRIAPGKDDVLGRTIISLQHVPRRLDHKLLNSQWYNLEKHVIVDGEQKKETKFSSRIHLRICLEGGYHVLDESTHYSSDLRPTAKQLWKHSIGILELGILTAQGLLPMKTKDGRGTTDAYCVAKYGQKWVRTRTIIDSFTPKWNEQYTWEVYDPCTVITIGVFDNCHLNGGEKANGARDTRIGKVRIRLSTLETDRVYTHAYPLIVLTPAGVKKMGEVQLAVRFTCSSLLNMMHLYSQPLLPKMHYVHPLSVMQVDNLRRQATNIVSTRLSRAEPPLRKEIVEYMLDVDSHMWSMRKSKANFFRIMGVLSPLIAVAKWFDQICHWRNPLTTILIHILFVILVLYPELILPTIFLYLFLIGVWYYRWRPRQPPHMDTRLSHAESAHPDELDEEFDTFPTSRPPDIVRMRYDRLRSVAGRIQTVVGDLATQGERLQSLLSWRDPRATALFVTFCFVAAIVLYVTPFRVVVFLAGLYTLRHPRFRHKMPSVPLNFFRRLPARTDSML</sequence>
<keyword id="KW-0106">Calcium</keyword>
<keyword id="KW-1003">Cell membrane</keyword>
<keyword id="KW-0472">Membrane</keyword>
<keyword id="KW-0479">Metal-binding</keyword>
<keyword id="KW-1185">Reference proteome</keyword>
<keyword id="KW-0677">Repeat</keyword>
<keyword id="KW-0812">Transmembrane</keyword>
<keyword id="KW-1133">Transmembrane helix</keyword>
<dbReference type="EMBL" id="AC104707">
    <property type="protein sequence ID" value="AAV31232.1"/>
    <property type="molecule type" value="Genomic_DNA"/>
</dbReference>
<dbReference type="EMBL" id="AP008211">
    <property type="protein sequence ID" value="BAF17265.1"/>
    <property type="molecule type" value="Genomic_DNA"/>
</dbReference>
<dbReference type="EMBL" id="AP014961">
    <property type="protein sequence ID" value="BAS93680.1"/>
    <property type="molecule type" value="Genomic_DNA"/>
</dbReference>
<dbReference type="EMBL" id="CM000142">
    <property type="protein sequence ID" value="EEE63479.1"/>
    <property type="molecule type" value="Genomic_DNA"/>
</dbReference>
<dbReference type="RefSeq" id="XP_015640336.1">
    <property type="nucleotide sequence ID" value="XM_015784850.1"/>
</dbReference>
<dbReference type="RefSeq" id="XP_015640337.1">
    <property type="nucleotide sequence ID" value="XM_015784851.1"/>
</dbReference>
<dbReference type="RefSeq" id="XP_015640338.1">
    <property type="nucleotide sequence ID" value="XM_015784852.1"/>
</dbReference>
<dbReference type="RefSeq" id="XP_015640339.1">
    <property type="nucleotide sequence ID" value="XM_015784853.1"/>
</dbReference>
<dbReference type="RefSeq" id="XP_015640340.1">
    <property type="nucleotide sequence ID" value="XM_015784854.1"/>
</dbReference>
<dbReference type="SMR" id="Q60EW9"/>
<dbReference type="FunCoup" id="Q60EW9">
    <property type="interactions" value="986"/>
</dbReference>
<dbReference type="STRING" id="39947.Q60EW9"/>
<dbReference type="PaxDb" id="39947-Q60EW9"/>
<dbReference type="EnsemblPlants" id="Os05t0370600-01">
    <property type="protein sequence ID" value="Os05t0370600-01"/>
    <property type="gene ID" value="Os05g0370600"/>
</dbReference>
<dbReference type="EnsemblPlants" id="Os05t0370600-02">
    <property type="protein sequence ID" value="Os05t0370600-02"/>
    <property type="gene ID" value="Os05g0370600"/>
</dbReference>
<dbReference type="GeneID" id="4338582"/>
<dbReference type="Gramene" id="Os05t0370600-01">
    <property type="protein sequence ID" value="Os05t0370600-01"/>
    <property type="gene ID" value="Os05g0370600"/>
</dbReference>
<dbReference type="Gramene" id="Os05t0370600-02">
    <property type="protein sequence ID" value="Os05t0370600-02"/>
    <property type="gene ID" value="Os05g0370600"/>
</dbReference>
<dbReference type="KEGG" id="dosa:Os05g0370600"/>
<dbReference type="KEGG" id="osa:4338582"/>
<dbReference type="eggNOG" id="ENOG502R77N">
    <property type="taxonomic scope" value="Eukaryota"/>
</dbReference>
<dbReference type="HOGENOM" id="CLU_003762_1_0_1"/>
<dbReference type="InParanoid" id="Q60EW9"/>
<dbReference type="OMA" id="DCGPTLE"/>
<dbReference type="OrthoDB" id="67700at2759"/>
<dbReference type="Proteomes" id="UP000000763">
    <property type="component" value="Chromosome 5"/>
</dbReference>
<dbReference type="Proteomes" id="UP000007752">
    <property type="component" value="Chromosome 5"/>
</dbReference>
<dbReference type="Proteomes" id="UP000059680">
    <property type="component" value="Chromosome 5"/>
</dbReference>
<dbReference type="GO" id="GO:0005886">
    <property type="term" value="C:plasma membrane"/>
    <property type="evidence" value="ECO:0000314"/>
    <property type="project" value="UniProtKB"/>
</dbReference>
<dbReference type="GO" id="GO:0046872">
    <property type="term" value="F:metal ion binding"/>
    <property type="evidence" value="ECO:0007669"/>
    <property type="project" value="UniProtKB-KW"/>
</dbReference>
<dbReference type="GO" id="GO:0009901">
    <property type="term" value="P:anther dehiscence"/>
    <property type="evidence" value="ECO:0000315"/>
    <property type="project" value="UniProtKB"/>
</dbReference>
<dbReference type="GO" id="GO:0010930">
    <property type="term" value="P:negative regulation of auxin mediated signaling pathway"/>
    <property type="evidence" value="ECO:0000314"/>
    <property type="project" value="UniProtKB"/>
</dbReference>
<dbReference type="CDD" id="cd08378">
    <property type="entry name" value="C2B_MCTP_PRT_plant"/>
    <property type="match status" value="1"/>
</dbReference>
<dbReference type="CDD" id="cd04019">
    <property type="entry name" value="C2C_MCTP_PRT_plant"/>
    <property type="match status" value="1"/>
</dbReference>
<dbReference type="CDD" id="cd08379">
    <property type="entry name" value="C2D_MCTP_PRT_plant"/>
    <property type="match status" value="1"/>
</dbReference>
<dbReference type="FunFam" id="2.60.40.150:FF:000090">
    <property type="entry name" value="C2 domain-containing protein"/>
    <property type="match status" value="1"/>
</dbReference>
<dbReference type="FunFam" id="2.60.40.150:FF:000119">
    <property type="entry name" value="C2 domain-containing protein"/>
    <property type="match status" value="1"/>
</dbReference>
<dbReference type="FunFam" id="2.60.40.150:FF:000128">
    <property type="entry name" value="C2 domain-containing protein"/>
    <property type="match status" value="1"/>
</dbReference>
<dbReference type="Gene3D" id="2.60.40.150">
    <property type="entry name" value="C2 domain"/>
    <property type="match status" value="3"/>
</dbReference>
<dbReference type="InterPro" id="IPR000008">
    <property type="entry name" value="C2_dom"/>
</dbReference>
<dbReference type="InterPro" id="IPR035892">
    <property type="entry name" value="C2_domain_sf"/>
</dbReference>
<dbReference type="InterPro" id="IPR047257">
    <property type="entry name" value="C2B_MCTP_PRT_plant"/>
</dbReference>
<dbReference type="InterPro" id="IPR047258">
    <property type="entry name" value="C2C_MCTP_PRT_plant"/>
</dbReference>
<dbReference type="InterPro" id="IPR047255">
    <property type="entry name" value="C2D_MCTP_PRT_plant"/>
</dbReference>
<dbReference type="InterPro" id="IPR013583">
    <property type="entry name" value="MCTP_C"/>
</dbReference>
<dbReference type="InterPro" id="IPR047259">
    <property type="entry name" value="QUIRKY-like"/>
</dbReference>
<dbReference type="PANTHER" id="PTHR31425:SF50">
    <property type="entry name" value="FT-INTERACTING PROTEIN 3-RELATED"/>
    <property type="match status" value="1"/>
</dbReference>
<dbReference type="PANTHER" id="PTHR31425">
    <property type="entry name" value="PHOSPHORIBOSYLANTHRANILATE TRANSFERASE ISOFORM 1"/>
    <property type="match status" value="1"/>
</dbReference>
<dbReference type="Pfam" id="PF00168">
    <property type="entry name" value="C2"/>
    <property type="match status" value="3"/>
</dbReference>
<dbReference type="Pfam" id="PF08372">
    <property type="entry name" value="PRT_C"/>
    <property type="match status" value="1"/>
</dbReference>
<dbReference type="SMART" id="SM00239">
    <property type="entry name" value="C2"/>
    <property type="match status" value="3"/>
</dbReference>
<dbReference type="SUPFAM" id="SSF49562">
    <property type="entry name" value="C2 domain (Calcium/lipid-binding domain, CaLB)"/>
    <property type="match status" value="3"/>
</dbReference>
<dbReference type="PROSITE" id="PS50004">
    <property type="entry name" value="C2"/>
    <property type="match status" value="3"/>
</dbReference>
<name>FTIP7_ORYSJ</name>
<comment type="function">
    <text evidence="4">Promotes nuclear translocation of the transcription factor OSH1, which directly suppresses the auxin biosynthetic gene YUCCA4 during the late development of anthers (PubMed:29915329). Reduction of auxin levels at late stage of anther development, after meiosis of microspore mother cells, is necessary for normal anther dehiscence and seed setting (PubMed:29915329). Required for jasmonate (JA) biosynthetic genes expression and JA production in anthers (PubMed:29915329).</text>
</comment>
<comment type="cofactor">
    <cofactor evidence="2">
        <name>Ca(2+)</name>
        <dbReference type="ChEBI" id="CHEBI:29108"/>
    </cofactor>
</comment>
<comment type="subunit">
    <text evidence="4">Interacts with OSH1.</text>
</comment>
<comment type="subcellular location">
    <subcellularLocation>
        <location evidence="4">Cell membrane</location>
        <topology evidence="1">Multi-pass membrane protein</topology>
    </subcellularLocation>
    <text evidence="7">May be associated with the endoplasmic reticulum membrane in the close vicinity of the plasma membrane.</text>
</comment>
<comment type="tissue specificity">
    <text evidence="4">Expressed in roots, stems, lemma, palea, pistils and ovules (PubMed:29915329). Expressed at low levels in leaves (PubMed:29915329).</text>
</comment>
<comment type="developmental stage">
    <text evidence="4">Highly expressed in developing anthers before pollen mitotic divisions from stage 8 to stage 12, with a peak of expression at stage 9 (at protein level) (PubMed:29915329). Expressed in developing seeds from 3 to 10 days after flowering (at protein level) (PubMed:29915329).</text>
</comment>
<comment type="disruption phenotype">
    <text evidence="4">Male sterility due to defect in anther dehiscence and mature pollen grain release at anthesis.</text>
</comment>
<comment type="similarity">
    <text evidence="6">Belongs to the MCTP family.</text>
</comment>
<evidence type="ECO:0000255" key="1"/>
<evidence type="ECO:0000255" key="2">
    <source>
        <dbReference type="PROSITE-ProRule" id="PRU00041"/>
    </source>
</evidence>
<evidence type="ECO:0000256" key="3">
    <source>
        <dbReference type="SAM" id="MobiDB-lite"/>
    </source>
</evidence>
<evidence type="ECO:0000269" key="4">
    <source>
    </source>
</evidence>
<evidence type="ECO:0000303" key="5">
    <source>
    </source>
</evidence>
<evidence type="ECO:0000305" key="6"/>
<evidence type="ECO:0000305" key="7">
    <source>
    </source>
</evidence>
<evidence type="ECO:0000312" key="8">
    <source>
        <dbReference type="EMBL" id="AAV31232.1"/>
    </source>
</evidence>
<evidence type="ECO:0000312" key="9">
    <source>
        <dbReference type="EMBL" id="BAF17265.1"/>
    </source>
</evidence>
<evidence type="ECO:0000312" key="10">
    <source>
        <dbReference type="EMBL" id="EEE63479.1"/>
    </source>
</evidence>
<proteinExistence type="evidence at protein level"/>
<reference key="1">
    <citation type="journal article" date="2005" name="Mol. Genet. Genomics">
        <title>A fine physical map of the rice chromosome 5.</title>
        <authorList>
            <person name="Cheng C.-H."/>
            <person name="Chung M.C."/>
            <person name="Liu S.-M."/>
            <person name="Chen S.-K."/>
            <person name="Kao F.Y."/>
            <person name="Lin S.-J."/>
            <person name="Hsiao S.-H."/>
            <person name="Tseng I.C."/>
            <person name="Hsing Y.-I.C."/>
            <person name="Wu H.-P."/>
            <person name="Chen C.-S."/>
            <person name="Shaw J.-F."/>
            <person name="Wu J."/>
            <person name="Matsumoto T."/>
            <person name="Sasaki T."/>
            <person name="Chen H.-C."/>
            <person name="Chow T.-Y."/>
        </authorList>
    </citation>
    <scope>NUCLEOTIDE SEQUENCE [LARGE SCALE GENOMIC DNA]</scope>
    <source>
        <strain>cv. Nipponbare</strain>
    </source>
</reference>
<reference key="2">
    <citation type="journal article" date="2005" name="Nature">
        <title>The map-based sequence of the rice genome.</title>
        <authorList>
            <consortium name="International rice genome sequencing project (IRGSP)"/>
        </authorList>
    </citation>
    <scope>NUCLEOTIDE SEQUENCE [LARGE SCALE GENOMIC DNA]</scope>
    <source>
        <strain>cv. Nipponbare</strain>
    </source>
</reference>
<reference key="3">
    <citation type="journal article" date="2008" name="Nucleic Acids Res.">
        <title>The rice annotation project database (RAP-DB): 2008 update.</title>
        <authorList>
            <consortium name="The rice annotation project (RAP)"/>
        </authorList>
    </citation>
    <scope>GENOME REANNOTATION</scope>
    <source>
        <strain>cv. Nipponbare</strain>
    </source>
</reference>
<reference key="4">
    <citation type="journal article" date="2013" name="Rice">
        <title>Improvement of the Oryza sativa Nipponbare reference genome using next generation sequence and optical map data.</title>
        <authorList>
            <person name="Kawahara Y."/>
            <person name="de la Bastide M."/>
            <person name="Hamilton J.P."/>
            <person name="Kanamori H."/>
            <person name="McCombie W.R."/>
            <person name="Ouyang S."/>
            <person name="Schwartz D.C."/>
            <person name="Tanaka T."/>
            <person name="Wu J."/>
            <person name="Zhou S."/>
            <person name="Childs K.L."/>
            <person name="Davidson R.M."/>
            <person name="Lin H."/>
            <person name="Quesada-Ocampo L."/>
            <person name="Vaillancourt B."/>
            <person name="Sakai H."/>
            <person name="Lee S.S."/>
            <person name="Kim J."/>
            <person name="Numa H."/>
            <person name="Itoh T."/>
            <person name="Buell C.R."/>
            <person name="Matsumoto T."/>
        </authorList>
    </citation>
    <scope>GENOME REANNOTATION</scope>
    <source>
        <strain>cv. Nipponbare</strain>
    </source>
</reference>
<reference key="5">
    <citation type="journal article" date="2005" name="PLoS Biol.">
        <title>The genomes of Oryza sativa: a history of duplications.</title>
        <authorList>
            <person name="Yu J."/>
            <person name="Wang J."/>
            <person name="Lin W."/>
            <person name="Li S."/>
            <person name="Li H."/>
            <person name="Zhou J."/>
            <person name="Ni P."/>
            <person name="Dong W."/>
            <person name="Hu S."/>
            <person name="Zeng C."/>
            <person name="Zhang J."/>
            <person name="Zhang Y."/>
            <person name="Li R."/>
            <person name="Xu Z."/>
            <person name="Li S."/>
            <person name="Li X."/>
            <person name="Zheng H."/>
            <person name="Cong L."/>
            <person name="Lin L."/>
            <person name="Yin J."/>
            <person name="Geng J."/>
            <person name="Li G."/>
            <person name="Shi J."/>
            <person name="Liu J."/>
            <person name="Lv H."/>
            <person name="Li J."/>
            <person name="Wang J."/>
            <person name="Deng Y."/>
            <person name="Ran L."/>
            <person name="Shi X."/>
            <person name="Wang X."/>
            <person name="Wu Q."/>
            <person name="Li C."/>
            <person name="Ren X."/>
            <person name="Wang J."/>
            <person name="Wang X."/>
            <person name="Li D."/>
            <person name="Liu D."/>
            <person name="Zhang X."/>
            <person name="Ji Z."/>
            <person name="Zhao W."/>
            <person name="Sun Y."/>
            <person name="Zhang Z."/>
            <person name="Bao J."/>
            <person name="Han Y."/>
            <person name="Dong L."/>
            <person name="Ji J."/>
            <person name="Chen P."/>
            <person name="Wu S."/>
            <person name="Liu J."/>
            <person name="Xiao Y."/>
            <person name="Bu D."/>
            <person name="Tan J."/>
            <person name="Yang L."/>
            <person name="Ye C."/>
            <person name="Zhang J."/>
            <person name="Xu J."/>
            <person name="Zhou Y."/>
            <person name="Yu Y."/>
            <person name="Zhang B."/>
            <person name="Zhuang S."/>
            <person name="Wei H."/>
            <person name="Liu B."/>
            <person name="Lei M."/>
            <person name="Yu H."/>
            <person name="Li Y."/>
            <person name="Xu H."/>
            <person name="Wei S."/>
            <person name="He X."/>
            <person name="Fang L."/>
            <person name="Zhang Z."/>
            <person name="Zhang Y."/>
            <person name="Huang X."/>
            <person name="Su Z."/>
            <person name="Tong W."/>
            <person name="Li J."/>
            <person name="Tong Z."/>
            <person name="Li S."/>
            <person name="Ye J."/>
            <person name="Wang L."/>
            <person name="Fang L."/>
            <person name="Lei T."/>
            <person name="Chen C.-S."/>
            <person name="Chen H.-C."/>
            <person name="Xu Z."/>
            <person name="Li H."/>
            <person name="Huang H."/>
            <person name="Zhang F."/>
            <person name="Xu H."/>
            <person name="Li N."/>
            <person name="Zhao C."/>
            <person name="Li S."/>
            <person name="Dong L."/>
            <person name="Huang Y."/>
            <person name="Li L."/>
            <person name="Xi Y."/>
            <person name="Qi Q."/>
            <person name="Li W."/>
            <person name="Zhang B."/>
            <person name="Hu W."/>
            <person name="Zhang Y."/>
            <person name="Tian X."/>
            <person name="Jiao Y."/>
            <person name="Liang X."/>
            <person name="Jin J."/>
            <person name="Gao L."/>
            <person name="Zheng W."/>
            <person name="Hao B."/>
            <person name="Liu S.-M."/>
            <person name="Wang W."/>
            <person name="Yuan L."/>
            <person name="Cao M."/>
            <person name="McDermott J."/>
            <person name="Samudrala R."/>
            <person name="Wang J."/>
            <person name="Wong G.K.-S."/>
            <person name="Yang H."/>
        </authorList>
    </citation>
    <scope>NUCLEOTIDE SEQUENCE [LARGE SCALE GENOMIC DNA]</scope>
    <source>
        <strain>cv. Nipponbare</strain>
    </source>
</reference>
<reference key="6">
    <citation type="journal article" date="2018" name="Nat. Plants">
        <title>OsFTIP7 determines auxin-mediated anther dehiscence in rice.</title>
        <authorList>
            <person name="Song S."/>
            <person name="Chen Y."/>
            <person name="Liu L."/>
            <person name="See Y.H.B."/>
            <person name="Mao C."/>
            <person name="Gan Y."/>
            <person name="Yu H."/>
        </authorList>
    </citation>
    <scope>FUNCTION</scope>
    <scope>SUBCELLULAR LOCATION</scope>
    <scope>INTERACTION WITH OSH1</scope>
    <scope>TISSUE SPECIFICITY</scope>
    <scope>DEVELOPMENTAL STAGE</scope>
    <scope>DISRUPTION PHENOTYPE</scope>
</reference>